<name>ACP_CYAPA</name>
<evidence type="ECO:0000255" key="1">
    <source>
        <dbReference type="HAMAP-Rule" id="MF_01217"/>
    </source>
</evidence>
<evidence type="ECO:0000255" key="2">
    <source>
        <dbReference type="PROSITE-ProRule" id="PRU00258"/>
    </source>
</evidence>
<proteinExistence type="inferred from homology"/>
<dbReference type="EMBL" id="U30821">
    <property type="protein sequence ID" value="AAA81177.1"/>
    <property type="molecule type" value="Genomic_DNA"/>
</dbReference>
<dbReference type="PIR" id="T06834">
    <property type="entry name" value="T06834"/>
</dbReference>
<dbReference type="RefSeq" id="NP_043146.1">
    <property type="nucleotide sequence ID" value="NC_001675.1"/>
</dbReference>
<dbReference type="SMR" id="P48078"/>
<dbReference type="GeneID" id="801538"/>
<dbReference type="UniPathway" id="UPA00094"/>
<dbReference type="GO" id="GO:0009842">
    <property type="term" value="C:cyanelle"/>
    <property type="evidence" value="ECO:0007669"/>
    <property type="project" value="UniProtKB-SubCell"/>
</dbReference>
<dbReference type="GO" id="GO:0000036">
    <property type="term" value="F:acyl carrier activity"/>
    <property type="evidence" value="ECO:0007669"/>
    <property type="project" value="UniProtKB-UniRule"/>
</dbReference>
<dbReference type="Gene3D" id="1.10.1200.10">
    <property type="entry name" value="ACP-like"/>
    <property type="match status" value="1"/>
</dbReference>
<dbReference type="HAMAP" id="MF_01217">
    <property type="entry name" value="Acyl_carrier"/>
    <property type="match status" value="1"/>
</dbReference>
<dbReference type="InterPro" id="IPR003231">
    <property type="entry name" value="ACP"/>
</dbReference>
<dbReference type="InterPro" id="IPR036736">
    <property type="entry name" value="ACP-like_sf"/>
</dbReference>
<dbReference type="InterPro" id="IPR009081">
    <property type="entry name" value="PP-bd_ACP"/>
</dbReference>
<dbReference type="Pfam" id="PF00550">
    <property type="entry name" value="PP-binding"/>
    <property type="match status" value="1"/>
</dbReference>
<dbReference type="SUPFAM" id="SSF47336">
    <property type="entry name" value="ACP-like"/>
    <property type="match status" value="1"/>
</dbReference>
<dbReference type="PROSITE" id="PS50075">
    <property type="entry name" value="CARRIER"/>
    <property type="match status" value="1"/>
</dbReference>
<feature type="chain" id="PRO_0000180228" description="Acyl carrier protein">
    <location>
        <begin position="1"/>
        <end position="103"/>
    </location>
</feature>
<feature type="domain" description="Carrier" evidence="2">
    <location>
        <begin position="14"/>
        <end position="89"/>
    </location>
</feature>
<feature type="modified residue" description="O-(pantetheine 4'-phosphoryl)serine" evidence="2">
    <location>
        <position position="49"/>
    </location>
</feature>
<organism>
    <name type="scientific">Cyanophora paradoxa</name>
    <dbReference type="NCBI Taxonomy" id="2762"/>
    <lineage>
        <taxon>Eukaryota</taxon>
        <taxon>Glaucocystophyceae</taxon>
        <taxon>Cyanophoraceae</taxon>
        <taxon>Cyanophora</taxon>
    </lineage>
</organism>
<geneLocation type="cyanelle"/>
<reference key="1">
    <citation type="journal article" date="1995" name="Plant Mol. Biol. Rep.">
        <title>Nucleotide sequence of the cyanelle DNA from Cyanophora paradoxa.</title>
        <authorList>
            <person name="Stirewalt V.L."/>
            <person name="Michalowski C.B."/>
            <person name="Loeffelhardt W."/>
            <person name="Bohnert H.J."/>
            <person name="Bryant D.A."/>
        </authorList>
    </citation>
    <scope>NUCLEOTIDE SEQUENCE [LARGE SCALE GENOMIC DNA]</scope>
    <source>
        <strain>UTEX LB 555 / Pringsheim</strain>
    </source>
</reference>
<reference key="2">
    <citation type="book" date="1997" name="Eukaryotism and symbiosis">
        <title>The complete sequence of the cyanelle genome of Cyanophora paradoxa: the genetic complexity of a primitive plastid.</title>
        <editorList>
            <person name="Schenk H.E.A."/>
            <person name="Herrmann R."/>
            <person name="Jeon K.W."/>
            <person name="Mueller N.E."/>
            <person name="Schwemmler W."/>
        </editorList>
        <authorList>
            <person name="Loeffelhardt W."/>
            <person name="Stirewalt V.L."/>
            <person name="Michalowski C.B."/>
            <person name="Annarella M."/>
            <person name="Farley J.Y."/>
            <person name="Schluchter W.M."/>
            <person name="Chung S."/>
            <person name="Newmann-Spallart C."/>
            <person name="Steiner J.M."/>
            <person name="Jakowitsch J."/>
            <person name="Bohnert H.J."/>
            <person name="Bryant D.A."/>
        </authorList>
    </citation>
    <scope>NUCLEOTIDE SEQUENCE [LARGE SCALE GENOMIC DNA]</scope>
    <source>
        <strain>UTEX LB 555 / Pringsheim</strain>
    </source>
</reference>
<gene>
    <name evidence="1" type="primary">acpP</name>
    <name type="synonym">acl1</name>
</gene>
<keyword id="KW-0194">Cyanelle</keyword>
<keyword id="KW-0275">Fatty acid biosynthesis</keyword>
<keyword id="KW-0276">Fatty acid metabolism</keyword>
<keyword id="KW-0444">Lipid biosynthesis</keyword>
<keyword id="KW-0443">Lipid metabolism</keyword>
<keyword id="KW-0596">Phosphopantetheine</keyword>
<keyword id="KW-0597">Phosphoprotein</keyword>
<keyword id="KW-0934">Plastid</keyword>
<accession>P48078</accession>
<comment type="function">
    <text evidence="1">Carrier of the growing fatty acid chain in fatty acid biosynthesis.</text>
</comment>
<comment type="pathway">
    <text evidence="1">Lipid metabolism; fatty acid biosynthesis.</text>
</comment>
<comment type="subcellular location">
    <subcellularLocation>
        <location>Plastid</location>
        <location>Cyanelle</location>
    </subcellularLocation>
</comment>
<comment type="PTM">
    <text evidence="1">4'-phosphopantetheine is transferred from CoA to a specific serine of apo-ACP by AcpS. This modification is essential for activity because fatty acids are bound in thioester linkage to the sulfhydryl of the prosthetic group.</text>
</comment>
<comment type="similarity">
    <text evidence="1">Belongs to the acyl carrier protein (ACP) family.</text>
</comment>
<sequence>MSLSEQAILEQDKNIVSNIVQDILCEQISIEKTELNLDLYIYEDLKIDSLDLVEIIKQIEEKFDIKIDDSKILYMNTLEEFIDFTLQTIYMKHGFEYLQNKQF</sequence>
<protein>
    <recommendedName>
        <fullName evidence="1">Acyl carrier protein</fullName>
        <shortName evidence="1">ACP</shortName>
    </recommendedName>
</protein>